<sequence length="512" mass="55903">MAVAGAKRRAVAAPATTAAEEERQAREKMLEARRGDGADPEGEGVTLQRNITLINGVAIIVGTIIGSGIFVTPTGVLKEAGSPGLSLVVWAVCGVFSIVGALCYAELGTTISKSGGDYAYMLEVYGSLPAFLKLWIELLIIRPSSQYIVALVFATYLLKPVFPTCPVPEEAAKLVACLCVLLLTAVNCYSVKAATRVQDAFAAAKLLALALIILLGFIQMGKDIGQGDASNLHQKLSFEGTNLDVGNIVLALYSGLFAYGGWNYLNFVTEEMINPYRNLPLAIIISLPIVTLVYVLTNLAYFTTLSTNQMLTSEAVAVDFGNYHLGVMSWIIPVFVGLSCFGSVNGSLFTSSRLFFVGSREGHLPSILSMIHPQLLTPVPSLVFTCVMTLMYAFSRDIFSIINFFSFFNWLCVALAIIGMMWLRFKKPELERPIKVNLALPVFFILACLFLIAVSFWKTPLECGIGFAIILSGLPVYFFGVWWKNKPKWILQVIFSVTVLCQKLMQVVPQET</sequence>
<accession>Q63016</accession>
<accession>Q9QWL4</accession>
<keyword id="KW-0029">Amino-acid transport</keyword>
<keyword id="KW-1003">Cell membrane</keyword>
<keyword id="KW-1015">Disulfide bond</keyword>
<keyword id="KW-0458">Lysosome</keyword>
<keyword id="KW-0472">Membrane</keyword>
<keyword id="KW-0597">Phosphoprotein</keyword>
<keyword id="KW-1185">Reference proteome</keyword>
<keyword id="KW-0812">Transmembrane</keyword>
<keyword id="KW-1133">Transmembrane helix</keyword>
<keyword id="KW-0813">Transport</keyword>
<evidence type="ECO:0000250" key="1">
    <source>
        <dbReference type="UniProtKB" id="Q01650"/>
    </source>
</evidence>
<evidence type="ECO:0000250" key="2">
    <source>
        <dbReference type="UniProtKB" id="Q9Z127"/>
    </source>
</evidence>
<evidence type="ECO:0000256" key="3">
    <source>
        <dbReference type="SAM" id="MobiDB-lite"/>
    </source>
</evidence>
<evidence type="ECO:0000269" key="4">
    <source>
    </source>
</evidence>
<evidence type="ECO:0000269" key="5">
    <source>
    </source>
</evidence>
<evidence type="ECO:0000269" key="6">
    <source>
    </source>
</evidence>
<evidence type="ECO:0000269" key="7">
    <source>
    </source>
</evidence>
<evidence type="ECO:0000269" key="8">
    <source>
    </source>
</evidence>
<evidence type="ECO:0000269" key="9">
    <source>
    </source>
</evidence>
<evidence type="ECO:0000269" key="10">
    <source>
    </source>
</evidence>
<evidence type="ECO:0000269" key="11">
    <source>
    </source>
</evidence>
<evidence type="ECO:0000303" key="12">
    <source>
    </source>
</evidence>
<evidence type="ECO:0000303" key="13">
    <source>
    </source>
</evidence>
<evidence type="ECO:0000303" key="14">
    <source>
    </source>
</evidence>
<evidence type="ECO:0000303" key="15">
    <source>
    </source>
</evidence>
<evidence type="ECO:0000305" key="16"/>
<evidence type="ECO:0000305" key="17">
    <source>
    </source>
</evidence>
<evidence type="ECO:0000305" key="18">
    <source>
    </source>
</evidence>
<evidence type="ECO:0000305" key="19">
    <source>
    </source>
</evidence>
<evidence type="ECO:0000305" key="20">
    <source>
    </source>
</evidence>
<organism>
    <name type="scientific">Rattus norvegicus</name>
    <name type="common">Rat</name>
    <dbReference type="NCBI Taxonomy" id="10116"/>
    <lineage>
        <taxon>Eukaryota</taxon>
        <taxon>Metazoa</taxon>
        <taxon>Chordata</taxon>
        <taxon>Craniata</taxon>
        <taxon>Vertebrata</taxon>
        <taxon>Euteleostomi</taxon>
        <taxon>Mammalia</taxon>
        <taxon>Eutheria</taxon>
        <taxon>Euarchontoglires</taxon>
        <taxon>Glires</taxon>
        <taxon>Rodentia</taxon>
        <taxon>Myomorpha</taxon>
        <taxon>Muroidea</taxon>
        <taxon>Muridae</taxon>
        <taxon>Murinae</taxon>
        <taxon>Rattus</taxon>
    </lineage>
</organism>
<feature type="chain" id="PRO_0000054272" description="Large neutral amino acids transporter small subunit 1">
    <location>
        <begin position="1"/>
        <end position="512"/>
    </location>
</feature>
<feature type="topological domain" description="Cytoplasmic" evidence="16">
    <location>
        <begin position="1"/>
        <end position="50"/>
    </location>
</feature>
<feature type="transmembrane region" description="Helical" evidence="1">
    <location>
        <begin position="51"/>
        <end position="71"/>
    </location>
</feature>
<feature type="topological domain" description="Extracellular" evidence="16">
    <location>
        <begin position="72"/>
        <end position="84"/>
    </location>
</feature>
<feature type="transmembrane region" description="Helical" evidence="1">
    <location>
        <begin position="85"/>
        <end position="105"/>
    </location>
</feature>
<feature type="topological domain" description="Cytoplasmic" evidence="16">
    <location>
        <begin position="106"/>
        <end position="127"/>
    </location>
</feature>
<feature type="transmembrane region" description="Helical" evidence="1">
    <location>
        <begin position="128"/>
        <end position="148"/>
    </location>
</feature>
<feature type="topological domain" description="Extracellular" evidence="16">
    <location>
        <begin position="149"/>
        <end position="170"/>
    </location>
</feature>
<feature type="transmembrane region" description="Helical" evidence="1">
    <location>
        <begin position="171"/>
        <end position="191"/>
    </location>
</feature>
<feature type="topological domain" description="Cytoplasmic" evidence="16">
    <location>
        <begin position="192"/>
        <end position="193"/>
    </location>
</feature>
<feature type="transmembrane region" description="Helical" evidence="1">
    <location>
        <begin position="194"/>
        <end position="215"/>
    </location>
</feature>
<feature type="topological domain" description="Extracellular" evidence="16">
    <location>
        <begin position="216"/>
        <end position="247"/>
    </location>
</feature>
<feature type="transmembrane region" description="Helical" evidence="1">
    <location>
        <begin position="248"/>
        <end position="268"/>
    </location>
</feature>
<feature type="topological domain" description="Cytoplasmic" evidence="16">
    <location>
        <begin position="269"/>
        <end position="281"/>
    </location>
</feature>
<feature type="transmembrane region" description="Helical" evidence="1">
    <location>
        <begin position="282"/>
        <end position="302"/>
    </location>
</feature>
<feature type="topological domain" description="Extracellular" evidence="16">
    <location>
        <begin position="303"/>
        <end position="329"/>
    </location>
</feature>
<feature type="transmembrane region" description="Helical" evidence="1">
    <location>
        <begin position="330"/>
        <end position="350"/>
    </location>
</feature>
<feature type="topological domain" description="Cytoplasmic" evidence="16">
    <location>
        <begin position="351"/>
        <end position="374"/>
    </location>
</feature>
<feature type="transmembrane region" description="Helical" evidence="1">
    <location>
        <begin position="375"/>
        <end position="395"/>
    </location>
</feature>
<feature type="topological domain" description="Extracellular" evidence="16">
    <location>
        <begin position="396"/>
        <end position="400"/>
    </location>
</feature>
<feature type="transmembrane region" description="Helical" evidence="1">
    <location>
        <begin position="401"/>
        <end position="421"/>
    </location>
</feature>
<feature type="topological domain" description="Cytoplasmic" evidence="16">
    <location>
        <begin position="422"/>
        <end position="435"/>
    </location>
</feature>
<feature type="transmembrane region" description="Helical" evidence="1">
    <location>
        <begin position="436"/>
        <end position="456"/>
    </location>
</feature>
<feature type="topological domain" description="Extracellular" evidence="16">
    <location>
        <begin position="457"/>
        <end position="462"/>
    </location>
</feature>
<feature type="transmembrane region" description="Helical" evidence="1">
    <location>
        <begin position="463"/>
        <end position="483"/>
    </location>
</feature>
<feature type="topological domain" description="Cytoplasmic" evidence="16">
    <location>
        <begin position="484"/>
        <end position="512"/>
    </location>
</feature>
<feature type="region of interest" description="Disordered" evidence="3">
    <location>
        <begin position="1"/>
        <end position="43"/>
    </location>
</feature>
<feature type="compositionally biased region" description="Basic residues" evidence="3">
    <location>
        <begin position="1"/>
        <end position="10"/>
    </location>
</feature>
<feature type="compositionally biased region" description="Basic and acidic residues" evidence="3">
    <location>
        <begin position="20"/>
        <end position="37"/>
    </location>
</feature>
<feature type="modified residue" description="Phosphothreonine" evidence="1">
    <location>
        <position position="46"/>
    </location>
</feature>
<feature type="disulfide bond" description="Interchain (with C-210 in SLC3A2)" evidence="1">
    <location>
        <position position="165"/>
    </location>
</feature>
<reference key="1">
    <citation type="journal article" date="1998" name="J. Biol. Chem.">
        <title>Expression cloning and characterization of a transporter for large neutral amino acids activated by the heavy chain of 4F2 antigen (CD98).</title>
        <authorList>
            <person name="Kanai Y."/>
            <person name="Segawa H."/>
            <person name="Miyamoto K."/>
            <person name="Uchino H."/>
            <person name="Takeda E."/>
            <person name="Endou H."/>
        </authorList>
    </citation>
    <scope>NUCLEOTIDE SEQUENCE [MRNA]</scope>
    <scope>FUNCTION</scope>
    <scope>SUBUNIT</scope>
    <scope>TISSUE SPECIFICITY</scope>
    <scope>TRANSPORTER ACTIVITY</scope>
    <scope>BIOPHYSICOCHEMICAL PROPERTIES</scope>
</reference>
<reference key="2">
    <citation type="journal article" date="1995" name="Cancer Res.">
        <title>TA1, a highly conserved oncofetal complementary DNA from rat hepatoma, encodes an integral membrane protein associated with liver development, carcinogenesis, and cell activation.</title>
        <authorList>
            <person name="Sang J."/>
            <person name="Lim Y.P."/>
            <person name="Panzica M."/>
            <person name="Finch P."/>
            <person name="Thompson N.L."/>
        </authorList>
    </citation>
    <scope>NUCLEOTIDE SEQUENCE [MRNA] OF 272-512</scope>
    <scope>TISSUE SPECIFICITY</scope>
    <source>
        <tissue>Hepatoma</tissue>
    </source>
</reference>
<reference key="3">
    <citation type="journal article" date="2000" name="NeuroReport">
        <title>Expression of a system L neutral amino acid transporter at the blood-brain barrier.</title>
        <authorList>
            <person name="Matsuo H."/>
            <person name="Tsukada S."/>
            <person name="Nakata T."/>
            <person name="Chairoungdua A."/>
            <person name="Kim D.K."/>
            <person name="Cha S.H."/>
            <person name="Inatomi J."/>
            <person name="Yorifuji H."/>
            <person name="Fukuda J."/>
            <person name="Endou H."/>
            <person name="Kanai Y."/>
        </authorList>
    </citation>
    <scope>SUBCELLULAR LOCATION</scope>
    <scope>TISSUE SPECIFICITY</scope>
</reference>
<reference key="4">
    <citation type="journal article" date="2001" name="Biochem. J.">
        <title>Association of 4F2hc with light chains LAT1, LAT2 or y+LAT2 requires different domains.</title>
        <authorList>
            <person name="Broeer A."/>
            <person name="Friedrich B."/>
            <person name="Wagner C.A."/>
            <person name="Fillon S."/>
            <person name="Ganapathy V."/>
            <person name="Lang F."/>
            <person name="Broeer S."/>
        </authorList>
    </citation>
    <scope>FUNCTION</scope>
    <scope>TRANSPORTER ACTIVITY</scope>
    <scope>SUBUNIT</scope>
    <scope>SUBCELLULAR LOCATION</scope>
</reference>
<reference key="5">
    <citation type="journal article" date="2003" name="J. Neurochem.">
        <title>Site-directed mutagenesis of rabbit LAT1 at amino acids 219 and 234.</title>
        <authorList>
            <person name="Boado R.J."/>
            <person name="Li J.Y."/>
            <person name="Pardridge W.M."/>
        </authorList>
    </citation>
    <scope>FUNCTION</scope>
    <scope>BIOPHYSICOCHEMICAL PROPERTIES</scope>
    <scope>TRANSPORTER ACTIVITY</scope>
</reference>
<reference key="6">
    <citation type="journal article" date="2004" name="Biochem. Biophys. Res. Commun.">
        <title>Transcriptional regulation of the LAT-1/CD98 light chain.</title>
        <authorList>
            <person name="Padbury J.F."/>
            <person name="Diah S.K."/>
            <person name="McGonnigal B."/>
            <person name="Miller C."/>
            <person name="Fugere C."/>
            <person name="Kuzniar M."/>
            <person name="Thompson N.L."/>
        </authorList>
    </citation>
    <scope>TISSUE SPECIFICITY</scope>
    <scope>INDUCTION</scope>
</reference>
<reference key="7">
    <citation type="journal article" date="2005" name="Amino Acids">
        <title>Expression of LAT1 and LAT2 amino acid transporters in human and rat intestinal epithelial cells.</title>
        <authorList>
            <person name="Fraga S."/>
            <person name="Pinho M.J."/>
            <person name="Soares-da-Silva P."/>
        </authorList>
    </citation>
    <scope>SUBCELLULAR LOCATION</scope>
    <scope>TISSUE SPECIFICITY</scope>
</reference>
<reference key="8">
    <citation type="journal article" date="2005" name="Invest. Ophthalmol. Vis. Sci.">
        <title>L-type amino acid transporter 1-mediated L-leucine transport at the inner blood-retinal barrier.</title>
        <authorList>
            <person name="Tomi M."/>
            <person name="Mori M."/>
            <person name="Tachikawa M."/>
            <person name="Katayama K."/>
            <person name="Terasaki T."/>
            <person name="Hosoya K."/>
        </authorList>
    </citation>
    <scope>FUNCTION</scope>
    <scope>BIOPHYSICOCHEMICAL PROPERTIES</scope>
    <scope>TISSUE SPECIFICITY</scope>
    <scope>TRANSPORTER ACTIVITY</scope>
    <scope>ACTIVITY REGULATION</scope>
</reference>
<dbReference type="EMBL" id="AB015432">
    <property type="protein sequence ID" value="BAA33035.1"/>
    <property type="molecule type" value="mRNA"/>
</dbReference>
<dbReference type="EMBL" id="U00995">
    <property type="protein sequence ID" value="AAA74411.1"/>
    <property type="molecule type" value="mRNA"/>
</dbReference>
<dbReference type="RefSeq" id="NP_059049.1">
    <property type="nucleotide sequence ID" value="NM_017353.2"/>
</dbReference>
<dbReference type="SMR" id="Q63016"/>
<dbReference type="BioGRID" id="248432">
    <property type="interactions" value="1"/>
</dbReference>
<dbReference type="FunCoup" id="Q63016">
    <property type="interactions" value="322"/>
</dbReference>
<dbReference type="IntAct" id="Q63016">
    <property type="interactions" value="1"/>
</dbReference>
<dbReference type="STRING" id="10116.ENSRNOP00000025784"/>
<dbReference type="BindingDB" id="Q63016"/>
<dbReference type="ChEMBL" id="CHEMBL4149"/>
<dbReference type="DrugCentral" id="Q63016"/>
<dbReference type="TCDB" id="2.A.3.8.1">
    <property type="family name" value="the amino acid-polyamine-organocation (apc) family"/>
</dbReference>
<dbReference type="GlyGen" id="Q63016">
    <property type="glycosylation" value="1 site"/>
</dbReference>
<dbReference type="PhosphoSitePlus" id="Q63016"/>
<dbReference type="jPOST" id="Q63016"/>
<dbReference type="PaxDb" id="10116-ENSRNOP00000025784"/>
<dbReference type="Ensembl" id="ENSRNOT00000025784.3">
    <property type="protein sequence ID" value="ENSRNOP00000025784.1"/>
    <property type="gene ID" value="ENSRNOG00000018824.3"/>
</dbReference>
<dbReference type="GeneID" id="50719"/>
<dbReference type="KEGG" id="rno:50719"/>
<dbReference type="UCSC" id="RGD:620639">
    <property type="organism name" value="rat"/>
</dbReference>
<dbReference type="AGR" id="RGD:620639"/>
<dbReference type="CTD" id="8140"/>
<dbReference type="RGD" id="620639">
    <property type="gene designation" value="Slc7a5"/>
</dbReference>
<dbReference type="eggNOG" id="KOG1287">
    <property type="taxonomic scope" value="Eukaryota"/>
</dbReference>
<dbReference type="GeneTree" id="ENSGT00940000155581"/>
<dbReference type="HOGENOM" id="CLU_007946_3_0_1"/>
<dbReference type="InParanoid" id="Q63016"/>
<dbReference type="OMA" id="AWCQKVM"/>
<dbReference type="OrthoDB" id="10062876at2759"/>
<dbReference type="PhylomeDB" id="Q63016"/>
<dbReference type="TreeFam" id="TF313355"/>
<dbReference type="Reactome" id="R-RNO-210991">
    <property type="pathway name" value="Basigin interactions"/>
</dbReference>
<dbReference type="Reactome" id="R-RNO-352230">
    <property type="pathway name" value="Amino acid transport across the plasma membrane"/>
</dbReference>
<dbReference type="Reactome" id="R-RNO-71240">
    <property type="pathway name" value="Tryptophan catabolism"/>
</dbReference>
<dbReference type="SABIO-RK" id="Q63016"/>
<dbReference type="PRO" id="PR:Q63016"/>
<dbReference type="Proteomes" id="UP000002494">
    <property type="component" value="Chromosome 19"/>
</dbReference>
<dbReference type="Bgee" id="ENSRNOG00000018824">
    <property type="expression patterns" value="Expressed in pancreas and 20 other cell types or tissues"/>
</dbReference>
<dbReference type="GO" id="GO:1990184">
    <property type="term" value="C:amino acid transport complex"/>
    <property type="evidence" value="ECO:0000250"/>
    <property type="project" value="UniProtKB"/>
</dbReference>
<dbReference type="GO" id="GO:0016324">
    <property type="term" value="C:apical plasma membrane"/>
    <property type="evidence" value="ECO:0000314"/>
    <property type="project" value="ARUK-UCL"/>
</dbReference>
<dbReference type="GO" id="GO:0009925">
    <property type="term" value="C:basal plasma membrane"/>
    <property type="evidence" value="ECO:0000314"/>
    <property type="project" value="ARUK-UCL"/>
</dbReference>
<dbReference type="GO" id="GO:0016323">
    <property type="term" value="C:basolateral plasma membrane"/>
    <property type="evidence" value="ECO:0000314"/>
    <property type="project" value="ARUK-UCL"/>
</dbReference>
<dbReference type="GO" id="GO:0005829">
    <property type="term" value="C:cytosol"/>
    <property type="evidence" value="ECO:0007669"/>
    <property type="project" value="Ensembl"/>
</dbReference>
<dbReference type="GO" id="GO:0098591">
    <property type="term" value="C:external side of apical plasma membrane"/>
    <property type="evidence" value="ECO:0000314"/>
    <property type="project" value="ARUK-UCL"/>
</dbReference>
<dbReference type="GO" id="GO:0005765">
    <property type="term" value="C:lysosomal membrane"/>
    <property type="evidence" value="ECO:0007669"/>
    <property type="project" value="UniProtKB-SubCell"/>
</dbReference>
<dbReference type="GO" id="GO:0016020">
    <property type="term" value="C:membrane"/>
    <property type="evidence" value="ECO:0000250"/>
    <property type="project" value="UniProtKB"/>
</dbReference>
<dbReference type="GO" id="GO:0031528">
    <property type="term" value="C:microvillus membrane"/>
    <property type="evidence" value="ECO:0000266"/>
    <property type="project" value="RGD"/>
</dbReference>
<dbReference type="GO" id="GO:0005886">
    <property type="term" value="C:plasma membrane"/>
    <property type="evidence" value="ECO:0000314"/>
    <property type="project" value="UniProtKB"/>
</dbReference>
<dbReference type="GO" id="GO:0015171">
    <property type="term" value="F:amino acid transmembrane transporter activity"/>
    <property type="evidence" value="ECO:0000315"/>
    <property type="project" value="ARUK-UCL"/>
</dbReference>
<dbReference type="GO" id="GO:0015297">
    <property type="term" value="F:antiporter activity"/>
    <property type="evidence" value="ECO:0000250"/>
    <property type="project" value="UniProtKB"/>
</dbReference>
<dbReference type="GO" id="GO:0015173">
    <property type="term" value="F:aromatic amino acid transmembrane transporter activity"/>
    <property type="evidence" value="ECO:0000266"/>
    <property type="project" value="RGD"/>
</dbReference>
<dbReference type="GO" id="GO:0015179">
    <property type="term" value="F:L-amino acid transmembrane transporter activity"/>
    <property type="evidence" value="ECO:0000266"/>
    <property type="project" value="RGD"/>
</dbReference>
<dbReference type="GO" id="GO:0015190">
    <property type="term" value="F:L-leucine transmembrane transporter activity"/>
    <property type="evidence" value="ECO:0000250"/>
    <property type="project" value="UniProtKB"/>
</dbReference>
<dbReference type="GO" id="GO:0015196">
    <property type="term" value="F:L-tryptophan transmembrane transporter activity"/>
    <property type="evidence" value="ECO:0000250"/>
    <property type="project" value="UniProtKB"/>
</dbReference>
<dbReference type="GO" id="GO:0015175">
    <property type="term" value="F:neutral L-amino acid transmembrane transporter activity"/>
    <property type="evidence" value="ECO:0000266"/>
    <property type="project" value="RGD"/>
</dbReference>
<dbReference type="GO" id="GO:0042605">
    <property type="term" value="F:peptide antigen binding"/>
    <property type="evidence" value="ECO:0000250"/>
    <property type="project" value="UniProtKB"/>
</dbReference>
<dbReference type="GO" id="GO:0015349">
    <property type="term" value="F:thyroid hormone transmembrane transporter activity"/>
    <property type="evidence" value="ECO:0000266"/>
    <property type="project" value="RGD"/>
</dbReference>
<dbReference type="GO" id="GO:0032328">
    <property type="term" value="P:alanine transport"/>
    <property type="evidence" value="ECO:0000266"/>
    <property type="project" value="RGD"/>
</dbReference>
<dbReference type="GO" id="GO:0089718">
    <property type="term" value="P:amino acid import across plasma membrane"/>
    <property type="evidence" value="ECO:0000315"/>
    <property type="project" value="ARUK-UCL"/>
</dbReference>
<dbReference type="GO" id="GO:0003333">
    <property type="term" value="P:amino acid transmembrane transport"/>
    <property type="evidence" value="ECO:0000318"/>
    <property type="project" value="GO_Central"/>
</dbReference>
<dbReference type="GO" id="GO:0071230">
    <property type="term" value="P:cellular response to amino acid stimulus"/>
    <property type="evidence" value="ECO:0000270"/>
    <property type="project" value="RGD"/>
</dbReference>
<dbReference type="GO" id="GO:0042149">
    <property type="term" value="P:cellular response to glucose starvation"/>
    <property type="evidence" value="ECO:0000270"/>
    <property type="project" value="RGD"/>
</dbReference>
<dbReference type="GO" id="GO:1903577">
    <property type="term" value="P:cellular response to L-arginine"/>
    <property type="evidence" value="ECO:0000270"/>
    <property type="project" value="RGD"/>
</dbReference>
<dbReference type="GO" id="GO:0071222">
    <property type="term" value="P:cellular response to lipopolysaccharide"/>
    <property type="evidence" value="ECO:0000270"/>
    <property type="project" value="RGD"/>
</dbReference>
<dbReference type="GO" id="GO:0015818">
    <property type="term" value="P:isoleucine transport"/>
    <property type="evidence" value="ECO:0000314"/>
    <property type="project" value="UniProtKB"/>
</dbReference>
<dbReference type="GO" id="GO:0015807">
    <property type="term" value="P:L-amino acid transport"/>
    <property type="evidence" value="ECO:0000315"/>
    <property type="project" value="RGD"/>
</dbReference>
<dbReference type="GO" id="GO:1902024">
    <property type="term" value="P:L-histidine transport"/>
    <property type="evidence" value="ECO:0000266"/>
    <property type="project" value="RGD"/>
</dbReference>
<dbReference type="GO" id="GO:1903801">
    <property type="term" value="P:L-leucine import across plasma membrane"/>
    <property type="evidence" value="ECO:0000266"/>
    <property type="project" value="RGD"/>
</dbReference>
<dbReference type="GO" id="GO:0015820">
    <property type="term" value="P:L-leucine transport"/>
    <property type="evidence" value="ECO:0000314"/>
    <property type="project" value="UniProtKB"/>
</dbReference>
<dbReference type="GO" id="GO:1904556">
    <property type="term" value="P:L-tryptophan transmembrane transport"/>
    <property type="evidence" value="ECO:0000250"/>
    <property type="project" value="UniProtKB"/>
</dbReference>
<dbReference type="GO" id="GO:0097421">
    <property type="term" value="P:liver regeneration"/>
    <property type="evidence" value="ECO:0000270"/>
    <property type="project" value="RGD"/>
</dbReference>
<dbReference type="GO" id="GO:0015821">
    <property type="term" value="P:methionine transport"/>
    <property type="evidence" value="ECO:0000266"/>
    <property type="project" value="RGD"/>
</dbReference>
<dbReference type="GO" id="GO:0010507">
    <property type="term" value="P:negative regulation of autophagy"/>
    <property type="evidence" value="ECO:0000315"/>
    <property type="project" value="RGD"/>
</dbReference>
<dbReference type="GO" id="GO:0010629">
    <property type="term" value="P:negative regulation of gene expression"/>
    <property type="evidence" value="ECO:0000266"/>
    <property type="project" value="RGD"/>
</dbReference>
<dbReference type="GO" id="GO:1905460">
    <property type="term" value="P:negative regulation of vascular associated smooth muscle cell apoptotic process"/>
    <property type="evidence" value="ECO:0000314"/>
    <property type="project" value="RGD"/>
</dbReference>
<dbReference type="GO" id="GO:0015804">
    <property type="term" value="P:neutral amino acid transport"/>
    <property type="evidence" value="ECO:0000250"/>
    <property type="project" value="UniProtKB"/>
</dbReference>
<dbReference type="GO" id="GO:0015823">
    <property type="term" value="P:phenylalanine transport"/>
    <property type="evidence" value="ECO:0000266"/>
    <property type="project" value="RGD"/>
</dbReference>
<dbReference type="GO" id="GO:0060252">
    <property type="term" value="P:positive regulation of glial cell proliferation"/>
    <property type="evidence" value="ECO:0000315"/>
    <property type="project" value="RGD"/>
</dbReference>
<dbReference type="GO" id="GO:0032740">
    <property type="term" value="P:positive regulation of interleukin-17 production"/>
    <property type="evidence" value="ECO:0000266"/>
    <property type="project" value="RGD"/>
</dbReference>
<dbReference type="GO" id="GO:0032753">
    <property type="term" value="P:positive regulation of interleukin-4 production"/>
    <property type="evidence" value="ECO:0000266"/>
    <property type="project" value="RGD"/>
</dbReference>
<dbReference type="GO" id="GO:1905534">
    <property type="term" value="P:positive regulation of L-leucine import across plasma membrane"/>
    <property type="evidence" value="ECO:0000315"/>
    <property type="project" value="RGD"/>
</dbReference>
<dbReference type="GO" id="GO:0032729">
    <property type="term" value="P:positive regulation of type II interferon production"/>
    <property type="evidence" value="ECO:0000266"/>
    <property type="project" value="RGD"/>
</dbReference>
<dbReference type="GO" id="GO:0015824">
    <property type="term" value="P:proline transport"/>
    <property type="evidence" value="ECO:0000266"/>
    <property type="project" value="RGD"/>
</dbReference>
<dbReference type="GO" id="GO:0055093">
    <property type="term" value="P:response to hyperoxia"/>
    <property type="evidence" value="ECO:0000270"/>
    <property type="project" value="RGD"/>
</dbReference>
<dbReference type="GO" id="GO:0014850">
    <property type="term" value="P:response to muscle activity"/>
    <property type="evidence" value="ECO:0000270"/>
    <property type="project" value="RGD"/>
</dbReference>
<dbReference type="GO" id="GO:0070327">
    <property type="term" value="P:thyroid hormone transport"/>
    <property type="evidence" value="ECO:0000266"/>
    <property type="project" value="RGD"/>
</dbReference>
<dbReference type="GO" id="GO:0015827">
    <property type="term" value="P:tryptophan transport"/>
    <property type="evidence" value="ECO:0000314"/>
    <property type="project" value="UniProtKB"/>
</dbReference>
<dbReference type="GO" id="GO:0015828">
    <property type="term" value="P:tyrosine transport"/>
    <property type="evidence" value="ECO:0000266"/>
    <property type="project" value="RGD"/>
</dbReference>
<dbReference type="GO" id="GO:0015829">
    <property type="term" value="P:valine transport"/>
    <property type="evidence" value="ECO:0000315"/>
    <property type="project" value="RGD"/>
</dbReference>
<dbReference type="GO" id="GO:0042908">
    <property type="term" value="P:xenobiotic transport"/>
    <property type="evidence" value="ECO:0000266"/>
    <property type="project" value="RGD"/>
</dbReference>
<dbReference type="FunFam" id="1.20.1740.10:FF:000003">
    <property type="entry name" value="Y+L amino acid transporter 1 isoform X1"/>
    <property type="match status" value="1"/>
</dbReference>
<dbReference type="Gene3D" id="1.20.1740.10">
    <property type="entry name" value="Amino acid/polyamine transporter I"/>
    <property type="match status" value="1"/>
</dbReference>
<dbReference type="InterPro" id="IPR002293">
    <property type="entry name" value="AA/rel_permease1"/>
</dbReference>
<dbReference type="InterPro" id="IPR050598">
    <property type="entry name" value="AminoAcid_Transporter"/>
</dbReference>
<dbReference type="InterPro" id="IPR004760">
    <property type="entry name" value="L_AA_transporter"/>
</dbReference>
<dbReference type="NCBIfam" id="TIGR00911">
    <property type="entry name" value="2A0308"/>
    <property type="match status" value="1"/>
</dbReference>
<dbReference type="PANTHER" id="PTHR11785">
    <property type="entry name" value="AMINO ACID TRANSPORTER"/>
    <property type="match status" value="1"/>
</dbReference>
<dbReference type="PANTHER" id="PTHR11785:SF315">
    <property type="entry name" value="LARGE NEUTRAL AMINO ACIDS TRANSPORTER SMALL SUBUNIT 1"/>
    <property type="match status" value="1"/>
</dbReference>
<dbReference type="Pfam" id="PF13520">
    <property type="entry name" value="AA_permease_2"/>
    <property type="match status" value="1"/>
</dbReference>
<dbReference type="PIRSF" id="PIRSF006060">
    <property type="entry name" value="AA_transporter"/>
    <property type="match status" value="1"/>
</dbReference>
<gene>
    <name type="primary">Slc7a5</name>
    <name evidence="15" type="synonym">Lat1</name>
    <name type="synonym">Mpe16</name>
    <name evidence="14" type="synonym">Ta1</name>
</gene>
<comment type="function">
    <text evidence="1 2 5 6 11 19">The heterodimer with SLC3A2 functions as a sodium-independent, high-affinity transporter that mediates uptake of large neutral amino acids such as phenylalanine, tyrosine, L-DOPA, histidine, methionine, valine and alanine (By similarity). The heterodimer with SLC3A2 mediates the uptake of leucine, isoleucine and tryptophan (PubMed:11311135, PubMed:12614332, PubMed:15980244, PubMed:9726963). Functions as an amino acid exchanger (By similarity). May play a role in the transport of L-DOPA across the blood-brain barrier (By similarity). May act as the major transporter of tyrosine in fibroblasts (By similarity). May mediate blood-to-retina L-leucine transport across the inner blood-retinal barrier (Probable). Can mediate the transport of thyroid hormones diiodothyronine (T2), triiodothyronine (T3) and thyroxine (T4) across the cell membrane. When associated with LAPTM4B, the heterodimer formed by SLC3A2 and SLC7A5 is recruited to lysosomes to promote leucine uptake into these organelles, and thereby mediates mTORC1 activation. Involved in the uptake of toxic methylmercury (MeHg) when administered as the L-cysteine or D,L-homocysteine complexes. Involved in the cellular activity of small molecular weight nitrosothiols, via the stereoselective transport of L-nitrosocysteine (L-CNSO) across the membrane (By similarity).</text>
</comment>
<comment type="catalytic activity">
    <reaction evidence="1">
        <text>L-phenylalanine(in) = L-phenylalanine(out)</text>
        <dbReference type="Rhea" id="RHEA:27950"/>
        <dbReference type="ChEBI" id="CHEBI:58095"/>
    </reaction>
    <physiologicalReaction direction="right-to-left" evidence="1">
        <dbReference type="Rhea" id="RHEA:27952"/>
    </physiologicalReaction>
</comment>
<comment type="catalytic activity">
    <reaction evidence="6">
        <text>L-tryptophan(in) = L-tryptophan(out)</text>
        <dbReference type="Rhea" id="RHEA:70947"/>
        <dbReference type="ChEBI" id="CHEBI:57912"/>
    </reaction>
    <physiologicalReaction direction="right-to-left" evidence="18">
        <dbReference type="Rhea" id="RHEA:70949"/>
    </physiologicalReaction>
</comment>
<comment type="catalytic activity">
    <reaction evidence="1">
        <text>L-histidine(out) = L-histidine(in)</text>
        <dbReference type="Rhea" id="RHEA:72807"/>
        <dbReference type="ChEBI" id="CHEBI:57595"/>
    </reaction>
</comment>
<comment type="catalytic activity">
    <reaction evidence="8 11">
        <text>L-leucine(in) = L-leucine(out)</text>
        <dbReference type="Rhea" id="RHEA:73011"/>
        <dbReference type="ChEBI" id="CHEBI:57427"/>
    </reaction>
    <physiologicalReaction direction="right-to-left" evidence="20">
        <dbReference type="Rhea" id="RHEA:73013"/>
    </physiologicalReaction>
</comment>
<comment type="catalytic activity">
    <reaction evidence="5">
        <text>L-isoleucine(in) = L-isoleucine(out)</text>
        <dbReference type="Rhea" id="RHEA:70943"/>
        <dbReference type="ChEBI" id="CHEBI:58045"/>
    </reaction>
    <physiologicalReaction direction="right-to-left" evidence="17">
        <dbReference type="Rhea" id="RHEA:70945"/>
    </physiologicalReaction>
</comment>
<comment type="catalytic activity">
    <reaction evidence="1">
        <text>L-valine(in) = L-valine(out)</text>
        <dbReference type="Rhea" id="RHEA:29703"/>
        <dbReference type="ChEBI" id="CHEBI:57762"/>
    </reaction>
    <physiologicalReaction direction="right-to-left" evidence="1">
        <dbReference type="Rhea" id="RHEA:29705"/>
    </physiologicalReaction>
</comment>
<comment type="catalytic activity">
    <reaction evidence="1">
        <text>L-tyrosine(in) = L-tyrosine(out)</text>
        <dbReference type="Rhea" id="RHEA:68572"/>
        <dbReference type="ChEBI" id="CHEBI:58315"/>
    </reaction>
    <physiologicalReaction direction="right-to-left" evidence="1">
        <dbReference type="Rhea" id="RHEA:68574"/>
    </physiologicalReaction>
</comment>
<comment type="catalytic activity">
    <reaction evidence="1">
        <text>L-methionine(in) = L-methionine(out)</text>
        <dbReference type="Rhea" id="RHEA:70939"/>
        <dbReference type="ChEBI" id="CHEBI:57844"/>
    </reaction>
    <physiologicalReaction direction="right-to-left" evidence="1">
        <dbReference type="Rhea" id="RHEA:70941"/>
    </physiologicalReaction>
</comment>
<comment type="catalytic activity">
    <reaction evidence="1">
        <text>L-alanine(in) = L-alanine(out)</text>
        <dbReference type="Rhea" id="RHEA:70719"/>
        <dbReference type="ChEBI" id="CHEBI:57972"/>
    </reaction>
    <physiologicalReaction direction="right-to-left" evidence="1">
        <dbReference type="Rhea" id="RHEA:70721"/>
    </physiologicalReaction>
</comment>
<comment type="catalytic activity">
    <reaction evidence="1">
        <text>3,3'-diiodo-L-thyronine(out) = 3,3'-diiodo-L-thyronine(in)</text>
        <dbReference type="Rhea" id="RHEA:71823"/>
        <dbReference type="ChEBI" id="CHEBI:176514"/>
    </reaction>
</comment>
<comment type="catalytic activity">
    <reaction evidence="1">
        <text>3,3',5-triiodo-L-thyronine(out) = 3,3',5-triiodo-L-thyronine(in)</text>
        <dbReference type="Rhea" id="RHEA:71811"/>
        <dbReference type="ChEBI" id="CHEBI:533015"/>
    </reaction>
</comment>
<comment type="catalytic activity">
    <reaction evidence="1">
        <text>L-thyroxine(out) = L-thyroxine(in)</text>
        <dbReference type="Rhea" id="RHEA:71819"/>
        <dbReference type="ChEBI" id="CHEBI:58448"/>
    </reaction>
</comment>
<comment type="activity regulation">
    <text evidence="8">L-leucine uptake by TR-iBRB2 cells was inhibited by L-leucine, L-phenylalanine, L-methionine, L-isoleucine, L-valine, L-tyrosine, L-tryptophan, D-leucine, D-phenylalanine, D-methionine and by 2-aminobicyclo-(2,2,1)-heptane-2-carboxylic acid (BCH) (a specific inhibitor of system L transport).</text>
</comment>
<comment type="biophysicochemical properties">
    <kinetics>
        <KM evidence="8">14.1 uM for L-leucine</KM>
        <KM evidence="6">18.5 uM for tryptophan (in frog oocytes)</KM>
        <KM evidence="11">18.1 uM for leucine</KM>
        <text>Km values in PubMed:9726963, PubMed:12614332 were determined for the heterodimer of SLC7A5/LAT1 and SLC3A2/4F2hc.</text>
    </kinetics>
</comment>
<comment type="subunit">
    <text evidence="1 5 11">Disulfide-linked heterodimer with the amino acid transport protein SLC3A2/4F2hc (PubMed:11311135, PubMed:9726963). Interacts with LAPTM4B; this recruits the heterodimer formed by SLC3A2 and SLC7A5 to lysosomes to promote leucine uptake into these organelles and is required for mTORC1 activation (By similarity).</text>
</comment>
<comment type="subcellular location">
    <subcellularLocation>
        <location evidence="1">Apical cell membrane</location>
        <topology evidence="1">Multi-pass membrane protein</topology>
    </subcellularLocation>
    <subcellularLocation>
        <location evidence="5 9">Cell membrane</location>
        <topology evidence="1">Multi-pass membrane protein</topology>
    </subcellularLocation>
    <subcellularLocation>
        <location evidence="1">Lysosome membrane</location>
        <topology evidence="1">Multi-pass membrane protein</topology>
    </subcellularLocation>
    <text evidence="1 4">Located to the plasma membrane by SLC3A2/4F2hc. Localized to the apical membrane of placental syncytiotrophoblastic cells. Recruited to lysosomes by LAPTM4B (By similarity). Expressed in both luminal and abluminal membranes of brain capillary endothelial cells (PubMed:11095508).</text>
</comment>
<comment type="tissue specificity">
    <text evidence="4 7 8 9 10 11">Expressed in hepatoma but not in normal liver. Also expressed in placenta, testis, brain, ovary, spleen, mammary gland, and uterus. In brain expressed on capillary endothelia in cerebral cortex. Expressed in jejunum mucosa and the epithelial cells of the jejunum, ileum and colon. Also expressed in the intestinal epithelial cell line IEC-6. Expressed in the brain, retina, inner blood-retinal barrier of retina, retinal vascular endothelial cells, and in the retinal capillary endothelial cell line TR-iBRB2.</text>
</comment>
<comment type="induction">
    <text evidence="7">Expression induced in normal hepatic cells cultured in arginine-depleted medium.</text>
</comment>
<comment type="similarity">
    <text evidence="16">Belongs to the amino acid-polyamine-organocation (APC) superfamily. L-type amino acid transporter (LAT) (TC 2.A.3.8) family.</text>
</comment>
<proteinExistence type="evidence at protein level"/>
<protein>
    <recommendedName>
        <fullName>Large neutral amino acids transporter small subunit 1</fullName>
    </recommendedName>
    <alternativeName>
        <fullName>4F2 light chain</fullName>
        <shortName>4F2 LC</shortName>
        <shortName>4F2LC</shortName>
    </alternativeName>
    <alternativeName>
        <fullName>Integral membrane protein E16</fullName>
        <shortName evidence="14">Protein TA1</shortName>
    </alternativeName>
    <alternativeName>
        <fullName evidence="13">L-type amino acid transporter 1</fullName>
        <shortName evidence="12">LAT-1</shortName>
    </alternativeName>
    <alternativeName>
        <fullName>Solute carrier family 7 member 5</fullName>
    </alternativeName>
</protein>
<name>LAT1_RAT</name>